<evidence type="ECO:0000255" key="1"/>
<evidence type="ECO:0000269" key="2">
    <source>
    </source>
</evidence>
<evidence type="ECO:0000303" key="3">
    <source>
    </source>
</evidence>
<evidence type="ECO:0000305" key="4"/>
<evidence type="ECO:0000312" key="5">
    <source>
        <dbReference type="Araport" id="AT5G58560"/>
    </source>
</evidence>
<evidence type="ECO:0000312" key="6">
    <source>
        <dbReference type="EMBL" id="BAA97326.1"/>
    </source>
</evidence>
<feature type="transit peptide" description="Chloroplast" evidence="1">
    <location>
        <begin position="1"/>
        <end position="65"/>
    </location>
</feature>
<feature type="chain" id="PRO_0000226592" description="Farnesol kinase, chloroplastic">
    <location>
        <begin position="66"/>
        <end position="307"/>
    </location>
</feature>
<feature type="transmembrane region" description="Helical" evidence="1">
    <location>
        <begin position="77"/>
        <end position="97"/>
    </location>
</feature>
<feature type="transmembrane region" description="Helical" evidence="1">
    <location>
        <begin position="116"/>
        <end position="136"/>
    </location>
</feature>
<feature type="transmembrane region" description="Helical" evidence="1">
    <location>
        <begin position="137"/>
        <end position="157"/>
    </location>
</feature>
<feature type="transmembrane region" description="Helical" evidence="1">
    <location>
        <begin position="177"/>
        <end position="194"/>
    </location>
</feature>
<feature type="transmembrane region" description="Helical" evidence="1">
    <location>
        <begin position="197"/>
        <end position="217"/>
    </location>
</feature>
<feature type="transmembrane region" description="Helical" evidence="1">
    <location>
        <begin position="237"/>
        <end position="257"/>
    </location>
</feature>
<feature type="transmembrane region" description="Helical" evidence="1">
    <location>
        <begin position="265"/>
        <end position="285"/>
    </location>
</feature>
<feature type="sequence conflict" description="In Ref. 4; BAD43853." evidence="4" ref="4">
    <original>I</original>
    <variation>V</variation>
    <location>
        <position position="190"/>
    </location>
</feature>
<feature type="sequence conflict" description="In Ref. 3; AAM65097." evidence="4" ref="3">
    <original>A</original>
    <variation>G</variation>
    <location>
        <position position="249"/>
    </location>
</feature>
<dbReference type="EC" id="2.7.1.216" evidence="2"/>
<dbReference type="EMBL" id="AB020755">
    <property type="protein sequence ID" value="BAA97326.1"/>
    <property type="status" value="ALT_SEQ"/>
    <property type="molecule type" value="Genomic_DNA"/>
</dbReference>
<dbReference type="EMBL" id="CP002688">
    <property type="protein sequence ID" value="AED97069.1"/>
    <property type="molecule type" value="Genomic_DNA"/>
</dbReference>
<dbReference type="EMBL" id="AY087555">
    <property type="protein sequence ID" value="AAM65097.1"/>
    <property type="molecule type" value="mRNA"/>
</dbReference>
<dbReference type="EMBL" id="AK176090">
    <property type="protein sequence ID" value="BAD43853.1"/>
    <property type="molecule type" value="mRNA"/>
</dbReference>
<dbReference type="EMBL" id="AK176217">
    <property type="protein sequence ID" value="BAD43980.1"/>
    <property type="molecule type" value="mRNA"/>
</dbReference>
<dbReference type="RefSeq" id="NP_200664.1">
    <property type="nucleotide sequence ID" value="NM_125242.4"/>
</dbReference>
<dbReference type="SMR" id="Q67ZM7"/>
<dbReference type="BioGRID" id="21213">
    <property type="interactions" value="54"/>
</dbReference>
<dbReference type="FunCoup" id="Q67ZM7">
    <property type="interactions" value="20"/>
</dbReference>
<dbReference type="IntAct" id="Q67ZM7">
    <property type="interactions" value="54"/>
</dbReference>
<dbReference type="STRING" id="3702.Q67ZM7"/>
<dbReference type="PaxDb" id="3702-AT5G58560.1"/>
<dbReference type="ProteomicsDB" id="230557"/>
<dbReference type="EnsemblPlants" id="AT5G58560.1">
    <property type="protein sequence ID" value="AT5G58560.1"/>
    <property type="gene ID" value="AT5G58560"/>
</dbReference>
<dbReference type="GeneID" id="835969"/>
<dbReference type="Gramene" id="AT5G58560.1">
    <property type="protein sequence ID" value="AT5G58560.1"/>
    <property type="gene ID" value="AT5G58560"/>
</dbReference>
<dbReference type="KEGG" id="ath:AT5G58560"/>
<dbReference type="Araport" id="AT5G58560"/>
<dbReference type="TAIR" id="AT5G58560">
    <property type="gene designation" value="FOLK"/>
</dbReference>
<dbReference type="eggNOG" id="KOG4453">
    <property type="taxonomic scope" value="Eukaryota"/>
</dbReference>
<dbReference type="HOGENOM" id="CLU_058561_3_0_1"/>
<dbReference type="InParanoid" id="Q67ZM7"/>
<dbReference type="OMA" id="IQESSHM"/>
<dbReference type="PhylomeDB" id="Q67ZM7"/>
<dbReference type="BioCyc" id="ARA:AT5G58560-MONOMER"/>
<dbReference type="BioCyc" id="MetaCyc:AT5G58560-MONOMER"/>
<dbReference type="BRENDA" id="2.7.1.216">
    <property type="organism ID" value="399"/>
</dbReference>
<dbReference type="PRO" id="PR:Q67ZM7"/>
<dbReference type="Proteomes" id="UP000006548">
    <property type="component" value="Chromosome 5"/>
</dbReference>
<dbReference type="ExpressionAtlas" id="Q67ZM7">
    <property type="expression patterns" value="baseline and differential"/>
</dbReference>
<dbReference type="GO" id="GO:0031969">
    <property type="term" value="C:chloroplast membrane"/>
    <property type="evidence" value="ECO:0007669"/>
    <property type="project" value="UniProtKB-SubCell"/>
</dbReference>
<dbReference type="GO" id="GO:0102237">
    <property type="term" value="F:ATP:farnesol kinase activity"/>
    <property type="evidence" value="ECO:0007669"/>
    <property type="project" value="RHEA"/>
</dbReference>
<dbReference type="GO" id="GO:0102238">
    <property type="term" value="F:ATP:geraniol kinase activity"/>
    <property type="evidence" value="ECO:0007669"/>
    <property type="project" value="RHEA"/>
</dbReference>
<dbReference type="GO" id="GO:0102243">
    <property type="term" value="F:ATP:geranylgeraniol kinase activity"/>
    <property type="evidence" value="ECO:0007669"/>
    <property type="project" value="RHEA"/>
</dbReference>
<dbReference type="GO" id="GO:0052668">
    <property type="term" value="F:CTP:farnesol kinase activity"/>
    <property type="evidence" value="ECO:0000314"/>
    <property type="project" value="TAIR"/>
</dbReference>
<dbReference type="GO" id="GO:0052670">
    <property type="term" value="F:geraniol kinase activity"/>
    <property type="evidence" value="ECO:0000314"/>
    <property type="project" value="TAIR"/>
</dbReference>
<dbReference type="GO" id="GO:0052671">
    <property type="term" value="F:geranylgeraniol kinase activity"/>
    <property type="evidence" value="ECO:0000314"/>
    <property type="project" value="TAIR"/>
</dbReference>
<dbReference type="GO" id="GO:0016301">
    <property type="term" value="F:kinase activity"/>
    <property type="evidence" value="ECO:0007669"/>
    <property type="project" value="UniProtKB-KW"/>
</dbReference>
<dbReference type="GO" id="GO:0048440">
    <property type="term" value="P:carpel development"/>
    <property type="evidence" value="ECO:0000315"/>
    <property type="project" value="TAIR"/>
</dbReference>
<dbReference type="GO" id="GO:0016487">
    <property type="term" value="P:farnesol metabolic process"/>
    <property type="evidence" value="ECO:0000315"/>
    <property type="project" value="TAIR"/>
</dbReference>
<dbReference type="GO" id="GO:0006720">
    <property type="term" value="P:isoprenoid metabolic process"/>
    <property type="evidence" value="ECO:0000314"/>
    <property type="project" value="TAIR"/>
</dbReference>
<dbReference type="GO" id="GO:0009737">
    <property type="term" value="P:response to abscisic acid"/>
    <property type="evidence" value="ECO:0000315"/>
    <property type="project" value="TAIR"/>
</dbReference>
<dbReference type="InterPro" id="IPR039606">
    <property type="entry name" value="Phytol/farnesol_kinase"/>
</dbReference>
<dbReference type="PANTHER" id="PTHR32523:SF7">
    <property type="entry name" value="FARNESOL KINASE, CHLOROPLASTIC"/>
    <property type="match status" value="1"/>
</dbReference>
<dbReference type="PANTHER" id="PTHR32523">
    <property type="entry name" value="PHYTOL KINASE 1, CHLOROPLASTIC"/>
    <property type="match status" value="1"/>
</dbReference>
<sequence length="307" mass="33218">MATTSTTTKLSVLCCSFISSPLVDSPPSLAFFSPIPRFLTVRIATSFRSSSRFPATKIRKSSLAAVMFPENSVLSDVCAFGVTSIVAFSCLGFWGEIGKRGIFDQKLIRKLVHINIGLVFMLCWPLFSSGIQGALFASLVPGLNIVRMLLLGLGVYHDEGTIKSMSRHGDRRELLKGPLYYVLSITSACIYYWKSSPIAIAVICNLCAGDGMADIVGRRFGTEKLPYNKNKSFAGSIGMATAGFLASVAYMYYFASFGYIEDSGGMILRFLVISIASALVESLPISTDIDDNLTISLTSALAGFLLF</sequence>
<reference key="1">
    <citation type="journal article" date="2000" name="DNA Res.">
        <title>Structural analysis of Arabidopsis thaliana chromosome 5. X. Sequence features of the regions of 3,076,755 bp covered by sixty P1 and TAC clones.</title>
        <authorList>
            <person name="Sato S."/>
            <person name="Nakamura Y."/>
            <person name="Kaneko T."/>
            <person name="Katoh T."/>
            <person name="Asamizu E."/>
            <person name="Kotani H."/>
            <person name="Tabata S."/>
        </authorList>
    </citation>
    <scope>NUCLEOTIDE SEQUENCE [LARGE SCALE GENOMIC DNA]</scope>
    <source>
        <strain>cv. Columbia</strain>
    </source>
</reference>
<reference key="2">
    <citation type="journal article" date="2017" name="Plant J.">
        <title>Araport11: a complete reannotation of the Arabidopsis thaliana reference genome.</title>
        <authorList>
            <person name="Cheng C.Y."/>
            <person name="Krishnakumar V."/>
            <person name="Chan A.P."/>
            <person name="Thibaud-Nissen F."/>
            <person name="Schobel S."/>
            <person name="Town C.D."/>
        </authorList>
    </citation>
    <scope>GENOME REANNOTATION</scope>
    <source>
        <strain>cv. Columbia</strain>
    </source>
</reference>
<reference key="3">
    <citation type="submission" date="2002-03" db="EMBL/GenBank/DDBJ databases">
        <title>Full-length cDNA from Arabidopsis thaliana.</title>
        <authorList>
            <person name="Brover V.V."/>
            <person name="Troukhan M.E."/>
            <person name="Alexandrov N.A."/>
            <person name="Lu Y.-P."/>
            <person name="Flavell R.B."/>
            <person name="Feldmann K.A."/>
        </authorList>
    </citation>
    <scope>NUCLEOTIDE SEQUENCE [LARGE SCALE MRNA]</scope>
</reference>
<reference key="4">
    <citation type="submission" date="2004-09" db="EMBL/GenBank/DDBJ databases">
        <title>Large-scale analysis of RIKEN Arabidopsis full-length (RAFL) cDNAs.</title>
        <authorList>
            <person name="Totoki Y."/>
            <person name="Seki M."/>
            <person name="Ishida J."/>
            <person name="Nakajima M."/>
            <person name="Enju A."/>
            <person name="Kamiya A."/>
            <person name="Narusaka M."/>
            <person name="Shin-i T."/>
            <person name="Nakagawa M."/>
            <person name="Sakamoto N."/>
            <person name="Oishi K."/>
            <person name="Kohara Y."/>
            <person name="Kobayashi M."/>
            <person name="Toyoda A."/>
            <person name="Sakaki Y."/>
            <person name="Sakurai T."/>
            <person name="Iida K."/>
            <person name="Akiyama K."/>
            <person name="Satou M."/>
            <person name="Toyoda T."/>
            <person name="Konagaya A."/>
            <person name="Carninci P."/>
            <person name="Kawai J."/>
            <person name="Hayashizaki Y."/>
            <person name="Shinozaki K."/>
        </authorList>
    </citation>
    <scope>NUCLEOTIDE SEQUENCE [LARGE SCALE MRNA]</scope>
    <source>
        <strain>cv. Columbia</strain>
    </source>
</reference>
<reference key="5">
    <citation type="journal article" date="2006" name="Plant Cell">
        <title>The Arabidopsis vitamin E pathway gene5-1 mutant reveals a critical role for phytol kinase in seed tocopherol biosynthesis.</title>
        <authorList>
            <person name="Valentin H.E."/>
            <person name="Lincoln K."/>
            <person name="Moshiri F."/>
            <person name="Jensen P.K."/>
            <person name="Qi Q."/>
            <person name="Venkatesh T.V."/>
            <person name="Karunanandaa B."/>
            <person name="Baszis S.R."/>
            <person name="Norris S.R."/>
            <person name="Savidge B."/>
            <person name="Gruys K.J."/>
            <person name="Last R.L."/>
        </authorList>
    </citation>
    <scope>IDENTIFICATION</scope>
</reference>
<reference key="6">
    <citation type="journal article" date="2011" name="Plant J.">
        <title>Farnesol kinase is involved in farnesol metabolism, ABA signaling and flower development in Arabidopsis.</title>
        <authorList>
            <person name="Fitzpatrick A.H."/>
            <person name="Bhandari J."/>
            <person name="Crowell D.N."/>
        </authorList>
    </citation>
    <scope>FUNCTION</scope>
    <scope>CATALYTIC ACTIVITY</scope>
    <scope>SUBSTRATE SPECIFICITY</scope>
    <scope>DISRUPTION PHENOTYPE</scope>
    <scope>INDUCTION BY ABSCISIC ACID</scope>
    <source>
        <strain>cv. Columbia</strain>
    </source>
</reference>
<name>FOLK_ARATH</name>
<protein>
    <recommendedName>
        <fullName evidence="3">Farnesol kinase, chloroplastic</fullName>
        <ecNumber evidence="2">2.7.1.216</ecNumber>
    </recommendedName>
</protein>
<proteinExistence type="evidence at protein level"/>
<comment type="function">
    <text evidence="2">Kinase involved in negative regulation of abscisic acid (ABA) signaling. Substrate preference is farnesol &gt; geraniol &gt; geranylgeraniol, but has no activity with farnesyl phosphate. Can use CTP &gt; ATP &gt; GTP = UTP as phosphoryl donor.</text>
</comment>
<comment type="catalytic activity">
    <reaction evidence="2">
        <text>(2E,6E)-farnesol + CTP = (2E,6E)-farnesyl phosphate + CDP + H(+)</text>
        <dbReference type="Rhea" id="RHEA:51680"/>
        <dbReference type="ChEBI" id="CHEBI:15378"/>
        <dbReference type="ChEBI" id="CHEBI:16619"/>
        <dbReference type="ChEBI" id="CHEBI:37563"/>
        <dbReference type="ChEBI" id="CHEBI:58069"/>
        <dbReference type="ChEBI" id="CHEBI:88226"/>
        <dbReference type="EC" id="2.7.1.216"/>
    </reaction>
    <physiologicalReaction direction="left-to-right" evidence="2">
        <dbReference type="Rhea" id="RHEA:51681"/>
    </physiologicalReaction>
</comment>
<comment type="catalytic activity">
    <reaction evidence="2">
        <text>(2E,6E)-farnesol + ATP = (2E,6E)-farnesyl phosphate + ADP + H(+)</text>
        <dbReference type="Rhea" id="RHEA:61656"/>
        <dbReference type="ChEBI" id="CHEBI:15378"/>
        <dbReference type="ChEBI" id="CHEBI:16619"/>
        <dbReference type="ChEBI" id="CHEBI:30616"/>
        <dbReference type="ChEBI" id="CHEBI:88226"/>
        <dbReference type="ChEBI" id="CHEBI:456216"/>
        <dbReference type="EC" id="2.7.1.216"/>
    </reaction>
    <physiologicalReaction direction="left-to-right" evidence="2">
        <dbReference type="Rhea" id="RHEA:61657"/>
    </physiologicalReaction>
</comment>
<comment type="catalytic activity">
    <reaction evidence="2">
        <text>(2E)-geraniol + ATP = (2E)-geranyl phosphate + ADP + H(+)</text>
        <dbReference type="Rhea" id="RHEA:61660"/>
        <dbReference type="ChEBI" id="CHEBI:15378"/>
        <dbReference type="ChEBI" id="CHEBI:17447"/>
        <dbReference type="ChEBI" id="CHEBI:30616"/>
        <dbReference type="ChEBI" id="CHEBI:88107"/>
        <dbReference type="ChEBI" id="CHEBI:456216"/>
        <dbReference type="EC" id="2.7.1.216"/>
    </reaction>
    <physiologicalReaction direction="left-to-right" evidence="2">
        <dbReference type="Rhea" id="RHEA:61661"/>
    </physiologicalReaction>
</comment>
<comment type="catalytic activity">
    <reaction evidence="2">
        <text>(2E,6E,10E)-geranylgeraniol + ATP = (2E,6E,10E)-geranylgeranyl phosphate + ADP + H(+)</text>
        <dbReference type="Rhea" id="RHEA:61664"/>
        <dbReference type="ChEBI" id="CHEBI:15378"/>
        <dbReference type="ChEBI" id="CHEBI:30616"/>
        <dbReference type="ChEBI" id="CHEBI:46762"/>
        <dbReference type="ChEBI" id="CHEBI:144936"/>
        <dbReference type="ChEBI" id="CHEBI:456216"/>
        <dbReference type="EC" id="2.7.1.216"/>
    </reaction>
    <physiologicalReaction direction="left-to-right" evidence="2">
        <dbReference type="Rhea" id="RHEA:61665"/>
    </physiologicalReaction>
</comment>
<comment type="subcellular location">
    <subcellularLocation>
        <location evidence="4">Plastid</location>
        <location evidence="4">Chloroplast membrane</location>
        <topology evidence="4">Multi-pass membrane protein</topology>
    </subcellularLocation>
</comment>
<comment type="induction">
    <text evidence="2">Down-regulated by abscisic acid.</text>
</comment>
<comment type="disruption phenotype">
    <text evidence="2">Increased sensitivity to abscisic acid.</text>
</comment>
<comment type="similarity">
    <text evidence="4">Belongs to the polyprenol kinase family.</text>
</comment>
<comment type="sequence caution" evidence="4">
    <conflict type="erroneous gene model prediction">
        <sequence resource="EMBL-CDS" id="BAA97326"/>
    </conflict>
</comment>
<keyword id="KW-0150">Chloroplast</keyword>
<keyword id="KW-0418">Kinase</keyword>
<keyword id="KW-0472">Membrane</keyword>
<keyword id="KW-0934">Plastid</keyword>
<keyword id="KW-1185">Reference proteome</keyword>
<keyword id="KW-0808">Transferase</keyword>
<keyword id="KW-0809">Transit peptide</keyword>
<keyword id="KW-0812">Transmembrane</keyword>
<keyword id="KW-1133">Transmembrane helix</keyword>
<organism>
    <name type="scientific">Arabidopsis thaliana</name>
    <name type="common">Mouse-ear cress</name>
    <dbReference type="NCBI Taxonomy" id="3702"/>
    <lineage>
        <taxon>Eukaryota</taxon>
        <taxon>Viridiplantae</taxon>
        <taxon>Streptophyta</taxon>
        <taxon>Embryophyta</taxon>
        <taxon>Tracheophyta</taxon>
        <taxon>Spermatophyta</taxon>
        <taxon>Magnoliopsida</taxon>
        <taxon>eudicotyledons</taxon>
        <taxon>Gunneridae</taxon>
        <taxon>Pentapetalae</taxon>
        <taxon>rosids</taxon>
        <taxon>malvids</taxon>
        <taxon>Brassicales</taxon>
        <taxon>Brassicaceae</taxon>
        <taxon>Camelineae</taxon>
        <taxon>Arabidopsis</taxon>
    </lineage>
</organism>
<accession>Q67ZM7</accession>
<accession>Q67ZA1</accession>
<accession>Q8LAW9</accession>
<accession>Q9LV00</accession>
<gene>
    <name evidence="3" type="primary">FOLK</name>
    <name evidence="5" type="ordered locus">At5g58560</name>
    <name evidence="6" type="ORF">MZN1.8</name>
</gene>